<sequence length="1025" mass="110982">MKFFALFIYRPVATILLSVAITLCGILGFRMLPVAPLPQVDFPVIMVSASLPGASPETMASSVATPLERSLGRIAGVSEMTSSSSLGSTRIILQFDFDRDINGAARDVQAAINAAQSLLPSGMPSRPTYRKANPSDAPIMILTLTSDTYSQGELYDFASTQLAPTISQIDGVGDVDVGGSSLPAVRVGLNPQALFNQGVSLDDVRTAISNANVRKPQGALEDDTHRWQIQTNDELKTAAEYQPLIIHYNNGGAVRLGDVATVTDSVQDVRNAGMTNAKPAILLMIRKLPEANIIQTVDSIRARLPELQSTIPAAIDLQIAQDRSPTIRASLEEVEQTLVISVALVILVVFLFLRSGRATIIPAVAVPVSLIGTFAAMYLCGFSLNNLSLMALTIATGFVVDDAIVVLENIARHLEAGMKPLQAALQGTREVGFTVLSMSLSLVAVFLPLLLMGGLPGRLLREFAVTLSVAIGISLLVSLTLTPMMCGWMLKASKPREQKRLRGFGRMLVALQQGYGKSLKWVLNHTRLVGAVLLGTIALNIWLYISIPKTFFPEQDTGVLMGGIQADQSISFQAMRGKLQDFMKIIRDEPAVDNVTGFTGGSRVNSGMMFITLKPRGERSETAQQIIDRLRKKLAKEPGANLFLMAVQDIRVGGRQANASYQYTLLSDDLAALREWEPKIRKKLATLPELADVNSDQEDNGAEMNLIYDRDTMARLGIDVQAANSLLNNAFGQRQISTIYQPMNQYKVVMEVDPRYTQDISALEKMFVINNEGKAIPLSYFAKWQPANAPLSVNHQGLSAASTISFNLPTGKSLSDASAAIDRAMTQLGVPSTVRGSFAGTAQVFQETMNSQVILIIAAIATVYIVLGILYESYVHPLTILSTLPSAGVGALLALELFNAPFSLIALIGIMLLIGIVKKNAIMMVDFALEAQRHGNLTPQEAIFQACLLRFRPIMMTTLAALFGALPLVLSGGDGSELRQPLGITIVGGLVMSQLLTLYTTPVVYLFFDRLRLRFSRKPKQAVTE</sequence>
<feature type="chain" id="PRO_1000184870" description="Multidrug resistance protein MdtC">
    <location>
        <begin position="1"/>
        <end position="1025"/>
    </location>
</feature>
<feature type="transmembrane region" description="Helical" evidence="1">
    <location>
        <begin position="3"/>
        <end position="23"/>
    </location>
</feature>
<feature type="transmembrane region" description="Helical" evidence="1">
    <location>
        <begin position="333"/>
        <end position="353"/>
    </location>
</feature>
<feature type="transmembrane region" description="Helical" evidence="1">
    <location>
        <begin position="360"/>
        <end position="380"/>
    </location>
</feature>
<feature type="transmembrane region" description="Helical" evidence="1">
    <location>
        <begin position="387"/>
        <end position="407"/>
    </location>
</feature>
<feature type="transmembrane region" description="Helical" evidence="1">
    <location>
        <begin position="431"/>
        <end position="451"/>
    </location>
</feature>
<feature type="transmembrane region" description="Helical" evidence="1">
    <location>
        <begin position="463"/>
        <end position="483"/>
    </location>
</feature>
<feature type="transmembrane region" description="Helical" evidence="1">
    <location>
        <begin position="528"/>
        <end position="548"/>
    </location>
</feature>
<feature type="transmembrane region" description="Helical" evidence="1">
    <location>
        <begin position="853"/>
        <end position="873"/>
    </location>
</feature>
<feature type="transmembrane region" description="Helical" evidence="1">
    <location>
        <begin position="875"/>
        <end position="895"/>
    </location>
</feature>
<feature type="transmembrane region" description="Helical" evidence="1">
    <location>
        <begin position="897"/>
        <end position="917"/>
    </location>
</feature>
<feature type="transmembrane region" description="Helical" evidence="1">
    <location>
        <begin position="953"/>
        <end position="973"/>
    </location>
</feature>
<feature type="transmembrane region" description="Helical" evidence="1">
    <location>
        <begin position="984"/>
        <end position="1004"/>
    </location>
</feature>
<organism>
    <name type="scientific">Escherichia coli O81 (strain ED1a)</name>
    <dbReference type="NCBI Taxonomy" id="585397"/>
    <lineage>
        <taxon>Bacteria</taxon>
        <taxon>Pseudomonadati</taxon>
        <taxon>Pseudomonadota</taxon>
        <taxon>Gammaproteobacteria</taxon>
        <taxon>Enterobacterales</taxon>
        <taxon>Enterobacteriaceae</taxon>
        <taxon>Escherichia</taxon>
    </lineage>
</organism>
<protein>
    <recommendedName>
        <fullName evidence="1">Multidrug resistance protein MdtC</fullName>
    </recommendedName>
    <alternativeName>
        <fullName evidence="1">Multidrug transporter MdtC</fullName>
    </alternativeName>
</protein>
<evidence type="ECO:0000255" key="1">
    <source>
        <dbReference type="HAMAP-Rule" id="MF_01424"/>
    </source>
</evidence>
<name>MDTC_ECO81</name>
<gene>
    <name evidence="1" type="primary">mdtC</name>
    <name type="ordered locus">ECED1_2422</name>
</gene>
<proteinExistence type="evidence at transcript level"/>
<comment type="function">
    <text evidence="1">The MdtABC tripartite complex confers resistance against novobiocin and deoxycholate.</text>
</comment>
<comment type="subunit">
    <text evidence="1">Part of a tripartite efflux system composed of MdtA, MdtB and MdtC. MdtC forms a heteromultimer with MdtB.</text>
</comment>
<comment type="subcellular location">
    <subcellularLocation>
        <location evidence="1">Cell inner membrane</location>
        <topology evidence="1">Multi-pass membrane protein</topology>
    </subcellularLocation>
</comment>
<comment type="induction">
    <text>The mdtABC operon is transcriptionally activated by BaeR.</text>
</comment>
<comment type="similarity">
    <text evidence="1">Belongs to the resistance-nodulation-cell division (RND) (TC 2.A.6) family. MdtC subfamily.</text>
</comment>
<accession>B7MWY9</accession>
<reference key="1">
    <citation type="journal article" date="2009" name="PLoS Genet.">
        <title>Organised genome dynamics in the Escherichia coli species results in highly diverse adaptive paths.</title>
        <authorList>
            <person name="Touchon M."/>
            <person name="Hoede C."/>
            <person name="Tenaillon O."/>
            <person name="Barbe V."/>
            <person name="Baeriswyl S."/>
            <person name="Bidet P."/>
            <person name="Bingen E."/>
            <person name="Bonacorsi S."/>
            <person name="Bouchier C."/>
            <person name="Bouvet O."/>
            <person name="Calteau A."/>
            <person name="Chiapello H."/>
            <person name="Clermont O."/>
            <person name="Cruveiller S."/>
            <person name="Danchin A."/>
            <person name="Diard M."/>
            <person name="Dossat C."/>
            <person name="Karoui M.E."/>
            <person name="Frapy E."/>
            <person name="Garry L."/>
            <person name="Ghigo J.M."/>
            <person name="Gilles A.M."/>
            <person name="Johnson J."/>
            <person name="Le Bouguenec C."/>
            <person name="Lescat M."/>
            <person name="Mangenot S."/>
            <person name="Martinez-Jehanne V."/>
            <person name="Matic I."/>
            <person name="Nassif X."/>
            <person name="Oztas S."/>
            <person name="Petit M.A."/>
            <person name="Pichon C."/>
            <person name="Rouy Z."/>
            <person name="Ruf C.S."/>
            <person name="Schneider D."/>
            <person name="Tourret J."/>
            <person name="Vacherie B."/>
            <person name="Vallenet D."/>
            <person name="Medigue C."/>
            <person name="Rocha E.P.C."/>
            <person name="Denamur E."/>
        </authorList>
    </citation>
    <scope>NUCLEOTIDE SEQUENCE [LARGE SCALE GENOMIC DNA]</scope>
    <source>
        <strain>ED1a</strain>
    </source>
</reference>
<keyword id="KW-0997">Cell inner membrane</keyword>
<keyword id="KW-1003">Cell membrane</keyword>
<keyword id="KW-0472">Membrane</keyword>
<keyword id="KW-0812">Transmembrane</keyword>
<keyword id="KW-1133">Transmembrane helix</keyword>
<keyword id="KW-0813">Transport</keyword>
<dbReference type="EMBL" id="CU928162">
    <property type="protein sequence ID" value="CAR08605.2"/>
    <property type="molecule type" value="Genomic_DNA"/>
</dbReference>
<dbReference type="RefSeq" id="WP_000667508.1">
    <property type="nucleotide sequence ID" value="NC_011745.1"/>
</dbReference>
<dbReference type="SMR" id="B7MWY9"/>
<dbReference type="KEGG" id="ecq:ECED1_2422"/>
<dbReference type="HOGENOM" id="CLU_002755_1_2_6"/>
<dbReference type="Proteomes" id="UP000000748">
    <property type="component" value="Chromosome"/>
</dbReference>
<dbReference type="GO" id="GO:0005886">
    <property type="term" value="C:plasma membrane"/>
    <property type="evidence" value="ECO:0007669"/>
    <property type="project" value="UniProtKB-SubCell"/>
</dbReference>
<dbReference type="GO" id="GO:0042910">
    <property type="term" value="F:xenobiotic transmembrane transporter activity"/>
    <property type="evidence" value="ECO:0007669"/>
    <property type="project" value="TreeGrafter"/>
</dbReference>
<dbReference type="FunFam" id="1.20.1640.10:FF:000001">
    <property type="entry name" value="Efflux pump membrane transporter"/>
    <property type="match status" value="1"/>
</dbReference>
<dbReference type="FunFam" id="3.30.70.1430:FF:000001">
    <property type="entry name" value="Efflux pump membrane transporter"/>
    <property type="match status" value="1"/>
</dbReference>
<dbReference type="FunFam" id="3.30.2090.10:FF:000004">
    <property type="entry name" value="Multidrug resistance protein MdtC"/>
    <property type="match status" value="1"/>
</dbReference>
<dbReference type="FunFam" id="3.30.2090.10:FF:000005">
    <property type="entry name" value="Multidrug resistance protein MdtC"/>
    <property type="match status" value="1"/>
</dbReference>
<dbReference type="FunFam" id="3.30.70.1430:FF:000004">
    <property type="entry name" value="Multidrug resistance protein MdtC"/>
    <property type="match status" value="1"/>
</dbReference>
<dbReference type="Gene3D" id="3.30.70.1430">
    <property type="entry name" value="Multidrug efflux transporter AcrB pore domain"/>
    <property type="match status" value="2"/>
</dbReference>
<dbReference type="Gene3D" id="3.30.70.1440">
    <property type="entry name" value="Multidrug efflux transporter AcrB pore domain"/>
    <property type="match status" value="1"/>
</dbReference>
<dbReference type="Gene3D" id="3.30.70.1320">
    <property type="entry name" value="Multidrug efflux transporter AcrB pore domain like"/>
    <property type="match status" value="1"/>
</dbReference>
<dbReference type="Gene3D" id="3.30.2090.10">
    <property type="entry name" value="Multidrug efflux transporter AcrB TolC docking domain, DN and DC subdomains"/>
    <property type="match status" value="2"/>
</dbReference>
<dbReference type="Gene3D" id="1.20.1640.10">
    <property type="entry name" value="Multidrug efflux transporter AcrB transmembrane domain"/>
    <property type="match status" value="2"/>
</dbReference>
<dbReference type="HAMAP" id="MF_01424">
    <property type="entry name" value="MdtC"/>
    <property type="match status" value="1"/>
</dbReference>
<dbReference type="InterPro" id="IPR027463">
    <property type="entry name" value="AcrB_DN_DC_subdom"/>
</dbReference>
<dbReference type="InterPro" id="IPR001036">
    <property type="entry name" value="Acrflvin-R"/>
</dbReference>
<dbReference type="InterPro" id="IPR023931">
    <property type="entry name" value="Multidrug-R_MdtC"/>
</dbReference>
<dbReference type="NCBIfam" id="NF007905">
    <property type="entry name" value="PRK10614.1"/>
    <property type="match status" value="1"/>
</dbReference>
<dbReference type="NCBIfam" id="NF033617">
    <property type="entry name" value="RND_permease_2"/>
    <property type="match status" value="1"/>
</dbReference>
<dbReference type="PANTHER" id="PTHR32063">
    <property type="match status" value="1"/>
</dbReference>
<dbReference type="PANTHER" id="PTHR32063:SF34">
    <property type="entry name" value="MULTIDRUG RESISTANCE PROTEIN MDTC"/>
    <property type="match status" value="1"/>
</dbReference>
<dbReference type="Pfam" id="PF00873">
    <property type="entry name" value="ACR_tran"/>
    <property type="match status" value="1"/>
</dbReference>
<dbReference type="PRINTS" id="PR00702">
    <property type="entry name" value="ACRIFLAVINRP"/>
</dbReference>
<dbReference type="SUPFAM" id="SSF82693">
    <property type="entry name" value="Multidrug efflux transporter AcrB pore domain, PN1, PN2, PC1 and PC2 subdomains"/>
    <property type="match status" value="4"/>
</dbReference>
<dbReference type="SUPFAM" id="SSF82714">
    <property type="entry name" value="Multidrug efflux transporter AcrB TolC docking domain, DN and DC subdomains"/>
    <property type="match status" value="2"/>
</dbReference>
<dbReference type="SUPFAM" id="SSF82866">
    <property type="entry name" value="Multidrug efflux transporter AcrB transmembrane domain"/>
    <property type="match status" value="2"/>
</dbReference>